<organism>
    <name type="scientific">Aeropyrum pernix (strain ATCC 700893 / DSM 11879 / JCM 9820 / NBRC 100138 / K1)</name>
    <dbReference type="NCBI Taxonomy" id="272557"/>
    <lineage>
        <taxon>Archaea</taxon>
        <taxon>Thermoproteota</taxon>
        <taxon>Thermoprotei</taxon>
        <taxon>Desulfurococcales</taxon>
        <taxon>Desulfurococcaceae</taxon>
        <taxon>Aeropyrum</taxon>
    </lineage>
</organism>
<protein>
    <recommendedName>
        <fullName>Probable RNA 2'-phosphotransferase</fullName>
        <ecNumber>2.7.1.-</ecNumber>
    </recommendedName>
</protein>
<dbReference type="EC" id="2.7.1.-"/>
<dbReference type="EMBL" id="BA000002">
    <property type="protein sequence ID" value="BAA79116.2"/>
    <property type="molecule type" value="Genomic_DNA"/>
</dbReference>
<dbReference type="PIR" id="B72777">
    <property type="entry name" value="B72777"/>
</dbReference>
<dbReference type="RefSeq" id="WP_010865567.1">
    <property type="nucleotide sequence ID" value="NC_000854.2"/>
</dbReference>
<dbReference type="PDB" id="1WFX">
    <property type="method" value="X-ray"/>
    <property type="resolution" value="2.80 A"/>
    <property type="chains" value="A=35-220"/>
</dbReference>
<dbReference type="PDB" id="8TG3">
    <property type="method" value="X-ray"/>
    <property type="resolution" value="1.47 A"/>
    <property type="chains" value="A=35-220"/>
</dbReference>
<dbReference type="PDB" id="8TG4">
    <property type="method" value="X-ray"/>
    <property type="resolution" value="1.37 A"/>
    <property type="chains" value="A=35-220"/>
</dbReference>
<dbReference type="PDB" id="8TG6">
    <property type="method" value="X-ray"/>
    <property type="resolution" value="1.60 A"/>
    <property type="chains" value="A=35-220"/>
</dbReference>
<dbReference type="PDBsum" id="1WFX"/>
<dbReference type="PDBsum" id="8TG3"/>
<dbReference type="PDBsum" id="8TG4"/>
<dbReference type="PDBsum" id="8TG6"/>
<dbReference type="SMR" id="Q9YFP5"/>
<dbReference type="STRING" id="272557.APE_0204.1"/>
<dbReference type="EnsemblBacteria" id="BAA79116">
    <property type="protein sequence ID" value="BAA79116"/>
    <property type="gene ID" value="APE_0204.1"/>
</dbReference>
<dbReference type="GeneID" id="1445727"/>
<dbReference type="KEGG" id="ape:APE_0204.1"/>
<dbReference type="PATRIC" id="fig|272557.25.peg.146"/>
<dbReference type="eggNOG" id="arCOG04063">
    <property type="taxonomic scope" value="Archaea"/>
</dbReference>
<dbReference type="BRENDA" id="2.7.1.160">
    <property type="organism ID" value="171"/>
</dbReference>
<dbReference type="EvolutionaryTrace" id="Q9YFP5"/>
<dbReference type="Proteomes" id="UP000002518">
    <property type="component" value="Chromosome"/>
</dbReference>
<dbReference type="GO" id="GO:0003950">
    <property type="term" value="F:NAD+ poly-ADP-ribosyltransferase activity"/>
    <property type="evidence" value="ECO:0007669"/>
    <property type="project" value="InterPro"/>
</dbReference>
<dbReference type="GO" id="GO:0000215">
    <property type="term" value="F:tRNA 2'-phosphotransferase activity"/>
    <property type="evidence" value="ECO:0007669"/>
    <property type="project" value="TreeGrafter"/>
</dbReference>
<dbReference type="GO" id="GO:0006388">
    <property type="term" value="P:tRNA splicing, via endonucleolytic cleavage and ligation"/>
    <property type="evidence" value="ECO:0007669"/>
    <property type="project" value="UniProtKB-UniRule"/>
</dbReference>
<dbReference type="Gene3D" id="3.20.170.30">
    <property type="match status" value="1"/>
</dbReference>
<dbReference type="Gene3D" id="1.10.10.970">
    <property type="entry name" value="RNA 2'-phosphotransferase, Tpt1/KptA family, N-terminal domain"/>
    <property type="match status" value="1"/>
</dbReference>
<dbReference type="HAMAP" id="MF_00299">
    <property type="entry name" value="KptA"/>
    <property type="match status" value="1"/>
</dbReference>
<dbReference type="InterPro" id="IPR002745">
    <property type="entry name" value="Ptrans_KptA/Tpt1"/>
</dbReference>
<dbReference type="InterPro" id="IPR042081">
    <property type="entry name" value="RNA_2'-PTrans_C"/>
</dbReference>
<dbReference type="InterPro" id="IPR022928">
    <property type="entry name" value="RNA_2'-PTrans_KptA"/>
</dbReference>
<dbReference type="InterPro" id="IPR042080">
    <property type="entry name" value="RNA_2'-PTrans_N"/>
</dbReference>
<dbReference type="PANTHER" id="PTHR12684">
    <property type="entry name" value="PUTATIVE PHOSPHOTRANSFERASE"/>
    <property type="match status" value="1"/>
</dbReference>
<dbReference type="PANTHER" id="PTHR12684:SF2">
    <property type="entry name" value="TRNA 2'-PHOSPHOTRANSFERASE 1"/>
    <property type="match status" value="1"/>
</dbReference>
<dbReference type="Pfam" id="PF01885">
    <property type="entry name" value="PTS_2-RNA"/>
    <property type="match status" value="1"/>
</dbReference>
<dbReference type="SUPFAM" id="SSF56399">
    <property type="entry name" value="ADP-ribosylation"/>
    <property type="match status" value="1"/>
</dbReference>
<accession>Q9YFP5</accession>
<name>KPTA_AERPE</name>
<evidence type="ECO:0000250" key="1"/>
<evidence type="ECO:0000305" key="2"/>
<evidence type="ECO:0007829" key="3">
    <source>
        <dbReference type="PDB" id="8TG4"/>
    </source>
</evidence>
<comment type="function">
    <text evidence="1">Removes the 2'-phosphate from RNA via an intermediate in which the phosphate is ADP-ribosylated by NAD followed by a presumed transesterification to release the RNA and generate ADP-ribose 1''-2''-cyclic phosphate (APPR&gt;P). May function as an ADP-ribosylase (By similarity).</text>
</comment>
<comment type="similarity">
    <text evidence="2">Belongs to the KptA/TPT1 family.</text>
</comment>
<feature type="chain" id="PRO_0000157484" description="Probable RNA 2'-phosphotransferase">
    <location>
        <begin position="1"/>
        <end position="220"/>
    </location>
</feature>
<feature type="helix" evidence="3">
    <location>
        <begin position="36"/>
        <end position="48"/>
    </location>
</feature>
<feature type="helix" evidence="3">
    <location>
        <begin position="51"/>
        <end position="54"/>
    </location>
</feature>
<feature type="helix" evidence="3">
    <location>
        <begin position="66"/>
        <end position="75"/>
    </location>
</feature>
<feature type="helix" evidence="3">
    <location>
        <begin position="83"/>
        <end position="92"/>
    </location>
</feature>
<feature type="strand" evidence="3">
    <location>
        <begin position="98"/>
        <end position="101"/>
    </location>
</feature>
<feature type="strand" evidence="3">
    <location>
        <begin position="104"/>
        <end position="109"/>
    </location>
</feature>
<feature type="strand" evidence="3">
    <location>
        <begin position="126"/>
        <end position="133"/>
    </location>
</feature>
<feature type="helix" evidence="3">
    <location>
        <begin position="134"/>
        <end position="136"/>
    </location>
</feature>
<feature type="helix" evidence="3">
    <location>
        <begin position="137"/>
        <end position="143"/>
    </location>
</feature>
<feature type="strand" evidence="3">
    <location>
        <begin position="150"/>
        <end position="157"/>
    </location>
</feature>
<feature type="helix" evidence="3">
    <location>
        <begin position="159"/>
        <end position="167"/>
    </location>
</feature>
<feature type="strand" evidence="3">
    <location>
        <begin position="171"/>
        <end position="179"/>
    </location>
</feature>
<feature type="helix" evidence="3">
    <location>
        <begin position="180"/>
        <end position="185"/>
    </location>
</feature>
<feature type="strand" evidence="3">
    <location>
        <begin position="194"/>
        <end position="201"/>
    </location>
</feature>
<feature type="helix" evidence="3">
    <location>
        <begin position="205"/>
        <end position="207"/>
    </location>
</feature>
<feature type="strand" evidence="3">
    <location>
        <begin position="208"/>
        <end position="214"/>
    </location>
</feature>
<keyword id="KW-0002">3D-structure</keyword>
<keyword id="KW-0520">NAD</keyword>
<keyword id="KW-1185">Reference proteome</keyword>
<keyword id="KW-0808">Transferase</keyword>
<gene>
    <name type="primary">kptA</name>
    <name type="ordered locus">APE_0204.1</name>
</gene>
<sequence>MAEELPELALCCDGTVVEGRSNCRCKARAVLPGGMRVRLSKTLAGILRHHPGRYGVRLTREGWARVSEVVEGLRKAGWSWVEEWHIVGVALHDPKGRYELRNGEIRARYGHSIPVNVEPLPGEPPPILYHGTTEEALPLIMERGIMRGRRLKVHLTSSLEDAVSTGRRHGNLVAVLLVDVECLRRRGLKVERMSKTVYTVDWVPPECIAEVRRESLGRSL</sequence>
<proteinExistence type="evidence at protein level"/>
<reference key="1">
    <citation type="journal article" date="1999" name="DNA Res.">
        <title>Complete genome sequence of an aerobic hyper-thermophilic crenarchaeon, Aeropyrum pernix K1.</title>
        <authorList>
            <person name="Kawarabayasi Y."/>
            <person name="Hino Y."/>
            <person name="Horikawa H."/>
            <person name="Yamazaki S."/>
            <person name="Haikawa Y."/>
            <person name="Jin-no K."/>
            <person name="Takahashi M."/>
            <person name="Sekine M."/>
            <person name="Baba S."/>
            <person name="Ankai A."/>
            <person name="Kosugi H."/>
            <person name="Hosoyama A."/>
            <person name="Fukui S."/>
            <person name="Nagai Y."/>
            <person name="Nishijima K."/>
            <person name="Nakazawa H."/>
            <person name="Takamiya M."/>
            <person name="Masuda S."/>
            <person name="Funahashi T."/>
            <person name="Tanaka T."/>
            <person name="Kudoh Y."/>
            <person name="Yamazaki J."/>
            <person name="Kushida N."/>
            <person name="Oguchi A."/>
            <person name="Aoki K."/>
            <person name="Kubota K."/>
            <person name="Nakamura Y."/>
            <person name="Nomura N."/>
            <person name="Sako Y."/>
            <person name="Kikuchi H."/>
        </authorList>
    </citation>
    <scope>NUCLEOTIDE SEQUENCE [LARGE SCALE GENOMIC DNA]</scope>
    <source>
        <strain>ATCC 700893 / DSM 11879 / JCM 9820 / NBRC 100138 / K1</strain>
    </source>
</reference>